<name>WHIA_BACC1</name>
<proteinExistence type="inferred from homology"/>
<reference key="1">
    <citation type="journal article" date="2004" name="Nucleic Acids Res.">
        <title>The genome sequence of Bacillus cereus ATCC 10987 reveals metabolic adaptations and a large plasmid related to Bacillus anthracis pXO1.</title>
        <authorList>
            <person name="Rasko D.A."/>
            <person name="Ravel J."/>
            <person name="Oekstad O.A."/>
            <person name="Helgason E."/>
            <person name="Cer R.Z."/>
            <person name="Jiang L."/>
            <person name="Shores K.A."/>
            <person name="Fouts D.E."/>
            <person name="Tourasse N.J."/>
            <person name="Angiuoli S.V."/>
            <person name="Kolonay J.F."/>
            <person name="Nelson W.C."/>
            <person name="Kolstoe A.-B."/>
            <person name="Fraser C.M."/>
            <person name="Read T.D."/>
        </authorList>
    </citation>
    <scope>NUCLEOTIDE SEQUENCE [LARGE SCALE GENOMIC DNA]</scope>
    <source>
        <strain>ATCC 10987 / NRS 248</strain>
    </source>
</reference>
<keyword id="KW-0131">Cell cycle</keyword>
<keyword id="KW-0132">Cell division</keyword>
<keyword id="KW-0238">DNA-binding</keyword>
<comment type="function">
    <text evidence="1">Involved in cell division and chromosome segregation.</text>
</comment>
<comment type="similarity">
    <text evidence="1">Belongs to the WhiA family.</text>
</comment>
<evidence type="ECO:0000255" key="1">
    <source>
        <dbReference type="HAMAP-Rule" id="MF_01420"/>
    </source>
</evidence>
<feature type="chain" id="PRO_0000376431" description="Probable cell division protein WhiA">
    <location>
        <begin position="1"/>
        <end position="316"/>
    </location>
</feature>
<feature type="DNA-binding region" description="H-T-H motif" evidence="1">
    <location>
        <begin position="275"/>
        <end position="309"/>
    </location>
</feature>
<organism>
    <name type="scientific">Bacillus cereus (strain ATCC 10987 / NRS 248)</name>
    <dbReference type="NCBI Taxonomy" id="222523"/>
    <lineage>
        <taxon>Bacteria</taxon>
        <taxon>Bacillati</taxon>
        <taxon>Bacillota</taxon>
        <taxon>Bacilli</taxon>
        <taxon>Bacillales</taxon>
        <taxon>Bacillaceae</taxon>
        <taxon>Bacillus</taxon>
        <taxon>Bacillus cereus group</taxon>
    </lineage>
</organism>
<gene>
    <name evidence="1" type="primary">whiA</name>
    <name type="ordered locus">BCE_5257</name>
</gene>
<protein>
    <recommendedName>
        <fullName evidence="1">Probable cell division protein WhiA</fullName>
    </recommendedName>
</protein>
<sequence length="316" mass="36366">MSFASETKKELTNLEMKECCEKAELSALLRMNGSLSFSNRRLSIDIQTENAAIARRIYTLLKKGYDVTVELLVRKKMRLKKNNVYIVRLVEKSREILADLHIVRDDFSFIRNISQELIEKKCCKRSYLRGAFLAGGSVNNPETSSYHLEIFSLYKEHNDAICELMNGFDLNSKTLERRKGYITYLKEAEKITEFLNIIGAHNALLRFEDIRIVRDMRNSVNRLVNCETANLNKTIGAALRQIENIRYIDETVGLDILPDKLREIAQLRRDYQDVTLKELGEMVSGGKISKSGINHRLRKIDDIAEKLRAGETVAKK</sequence>
<accession>Q72XW6</accession>
<dbReference type="EMBL" id="AE017194">
    <property type="protein sequence ID" value="AAS44158.1"/>
    <property type="molecule type" value="Genomic_DNA"/>
</dbReference>
<dbReference type="SMR" id="Q72XW6"/>
<dbReference type="KEGG" id="bca:BCE_5257"/>
<dbReference type="HOGENOM" id="CLU_053282_0_0_9"/>
<dbReference type="Proteomes" id="UP000002527">
    <property type="component" value="Chromosome"/>
</dbReference>
<dbReference type="GO" id="GO:0003677">
    <property type="term" value="F:DNA binding"/>
    <property type="evidence" value="ECO:0007669"/>
    <property type="project" value="UniProtKB-UniRule"/>
</dbReference>
<dbReference type="GO" id="GO:0051301">
    <property type="term" value="P:cell division"/>
    <property type="evidence" value="ECO:0007669"/>
    <property type="project" value="UniProtKB-UniRule"/>
</dbReference>
<dbReference type="GO" id="GO:0043937">
    <property type="term" value="P:regulation of sporulation"/>
    <property type="evidence" value="ECO:0007669"/>
    <property type="project" value="InterPro"/>
</dbReference>
<dbReference type="FunFam" id="3.10.28.10:FF:000002">
    <property type="entry name" value="Probable cell division protein WhiA"/>
    <property type="match status" value="1"/>
</dbReference>
<dbReference type="Gene3D" id="3.10.28.10">
    <property type="entry name" value="Homing endonucleases"/>
    <property type="match status" value="1"/>
</dbReference>
<dbReference type="HAMAP" id="MF_01420">
    <property type="entry name" value="HTH_type_WhiA"/>
    <property type="match status" value="1"/>
</dbReference>
<dbReference type="InterPro" id="IPR027434">
    <property type="entry name" value="Homing_endonucl"/>
</dbReference>
<dbReference type="InterPro" id="IPR018478">
    <property type="entry name" value="Sporu_reg_WhiA_N_dom"/>
</dbReference>
<dbReference type="InterPro" id="IPR003802">
    <property type="entry name" value="Sporulation_regulator_WhiA"/>
</dbReference>
<dbReference type="InterPro" id="IPR023054">
    <property type="entry name" value="Sporulation_regulator_WhiA_C"/>
</dbReference>
<dbReference type="InterPro" id="IPR039518">
    <property type="entry name" value="WhiA_LAGLIDADG_dom"/>
</dbReference>
<dbReference type="NCBIfam" id="TIGR00647">
    <property type="entry name" value="DNA_bind_WhiA"/>
    <property type="match status" value="1"/>
</dbReference>
<dbReference type="PANTHER" id="PTHR37307">
    <property type="entry name" value="CELL DIVISION PROTEIN WHIA-RELATED"/>
    <property type="match status" value="1"/>
</dbReference>
<dbReference type="PANTHER" id="PTHR37307:SF1">
    <property type="entry name" value="CELL DIVISION PROTEIN WHIA-RELATED"/>
    <property type="match status" value="1"/>
</dbReference>
<dbReference type="Pfam" id="PF02650">
    <property type="entry name" value="HTH_WhiA"/>
    <property type="match status" value="1"/>
</dbReference>
<dbReference type="Pfam" id="PF14527">
    <property type="entry name" value="LAGLIDADG_WhiA"/>
    <property type="match status" value="1"/>
</dbReference>
<dbReference type="Pfam" id="PF10298">
    <property type="entry name" value="WhiA_N"/>
    <property type="match status" value="1"/>
</dbReference>
<dbReference type="SUPFAM" id="SSF55608">
    <property type="entry name" value="Homing endonucleases"/>
    <property type="match status" value="1"/>
</dbReference>